<comment type="function">
    <text evidence="1">Functions in the biosynthesis of branched-chain amino acids. Catalyzes the dehydration of (2R,3R)-2,3-dihydroxy-3-methylpentanoate (2,3-dihydroxy-3-methylvalerate) into 2-oxo-3-methylpentanoate (2-oxo-3-methylvalerate) and of (2R)-2,3-dihydroxy-3-methylbutanoate (2,3-dihydroxyisovalerate) into 2-oxo-3-methylbutanoate (2-oxoisovalerate), the penultimate precursor to L-isoleucine and L-valine, respectively.</text>
</comment>
<comment type="catalytic activity">
    <reaction evidence="1">
        <text>(2R)-2,3-dihydroxy-3-methylbutanoate = 3-methyl-2-oxobutanoate + H2O</text>
        <dbReference type="Rhea" id="RHEA:24809"/>
        <dbReference type="ChEBI" id="CHEBI:11851"/>
        <dbReference type="ChEBI" id="CHEBI:15377"/>
        <dbReference type="ChEBI" id="CHEBI:49072"/>
        <dbReference type="EC" id="4.2.1.9"/>
    </reaction>
    <physiologicalReaction direction="left-to-right" evidence="1">
        <dbReference type="Rhea" id="RHEA:24810"/>
    </physiologicalReaction>
</comment>
<comment type="catalytic activity">
    <reaction evidence="1">
        <text>(2R,3R)-2,3-dihydroxy-3-methylpentanoate = (S)-3-methyl-2-oxopentanoate + H2O</text>
        <dbReference type="Rhea" id="RHEA:27694"/>
        <dbReference type="ChEBI" id="CHEBI:15377"/>
        <dbReference type="ChEBI" id="CHEBI:35146"/>
        <dbReference type="ChEBI" id="CHEBI:49258"/>
        <dbReference type="EC" id="4.2.1.9"/>
    </reaction>
    <physiologicalReaction direction="left-to-right" evidence="1">
        <dbReference type="Rhea" id="RHEA:27695"/>
    </physiologicalReaction>
</comment>
<comment type="cofactor">
    <cofactor evidence="1">
        <name>[2Fe-2S] cluster</name>
        <dbReference type="ChEBI" id="CHEBI:190135"/>
    </cofactor>
    <text evidence="1">Binds 1 [2Fe-2S] cluster per subunit. This cluster acts as a Lewis acid cofactor.</text>
</comment>
<comment type="cofactor">
    <cofactor evidence="1">
        <name>Mg(2+)</name>
        <dbReference type="ChEBI" id="CHEBI:18420"/>
    </cofactor>
</comment>
<comment type="pathway">
    <text evidence="1">Amino-acid biosynthesis; L-isoleucine biosynthesis; L-isoleucine from 2-oxobutanoate: step 3/4.</text>
</comment>
<comment type="pathway">
    <text evidence="1">Amino-acid biosynthesis; L-valine biosynthesis; L-valine from pyruvate: step 3/4.</text>
</comment>
<comment type="subunit">
    <text evidence="1">Homodimer.</text>
</comment>
<comment type="similarity">
    <text evidence="1">Belongs to the IlvD/Edd family.</text>
</comment>
<sequence>MRSDVIKKGLERAPHRSLLKALGITDDEMRRPFIGIVSSWNEIIPGHVHLDKVVEAVKAGVRMAGGVPFVFPTIGICDGIAMDHRGMKFSLPSRELIADSIEIVASGFPFDGLVFVPNCDKITPGMMMAMGRLNIPSVLISGGPMLAGRYNGRDIDLITVFEAVGGYKVGKVDEETLKAIEDLACPGAGSCAGLFTANTMNSLAEALGIAPRGNGTVPAVHAKRLRMAKEAGILVVELVKRDIKPRDIVTLDSFMNAVMVDLATGGSTNTVLHLKAIAESFGIDFDIKLFDELSRKIPHICNISPVGPYHIQDLDDAGGIYAVMKRLQENGLLKEDVMTIYLRKIGDLVREAKILNEDVIRPFDNPYHKEGGLGILFGNLAPEGAVAKLSGVPEKMMHHVGPAVVFEDGEEATKAILSGKIKKGDVVVIRYEGPKGGPGMREMLSPTSAIVGMGLAEDVALITDGRFSGGSHGAVIGHVSPEAAEGGPIGIVKDGDLIEIDFEKRTLNLLISDEEFERRMKEFTPLVKEVDSDYLRRYAFFVQSASKGATFRKP</sequence>
<name>ILVD_THESQ</name>
<protein>
    <recommendedName>
        <fullName evidence="1">Dihydroxy-acid dehydratase</fullName>
        <shortName evidence="1">DAD</shortName>
        <ecNumber evidence="1">4.2.1.9</ecNumber>
    </recommendedName>
</protein>
<keyword id="KW-0001">2Fe-2S</keyword>
<keyword id="KW-0028">Amino-acid biosynthesis</keyword>
<keyword id="KW-0100">Branched-chain amino acid biosynthesis</keyword>
<keyword id="KW-0408">Iron</keyword>
<keyword id="KW-0411">Iron-sulfur</keyword>
<keyword id="KW-0456">Lyase</keyword>
<keyword id="KW-0460">Magnesium</keyword>
<keyword id="KW-0479">Metal-binding</keyword>
<dbReference type="EC" id="4.2.1.9" evidence="1"/>
<dbReference type="EMBL" id="CP000969">
    <property type="protein sequence ID" value="ACB08742.1"/>
    <property type="molecule type" value="Genomic_DNA"/>
</dbReference>
<dbReference type="RefSeq" id="WP_012310510.1">
    <property type="nucleotide sequence ID" value="NC_010483.1"/>
</dbReference>
<dbReference type="SMR" id="B1L8U4"/>
<dbReference type="KEGG" id="trq:TRQ2_0386"/>
<dbReference type="HOGENOM" id="CLU_014271_4_2_0"/>
<dbReference type="UniPathway" id="UPA00047">
    <property type="reaction ID" value="UER00057"/>
</dbReference>
<dbReference type="UniPathway" id="UPA00049">
    <property type="reaction ID" value="UER00061"/>
</dbReference>
<dbReference type="Proteomes" id="UP000001687">
    <property type="component" value="Chromosome"/>
</dbReference>
<dbReference type="GO" id="GO:0005829">
    <property type="term" value="C:cytosol"/>
    <property type="evidence" value="ECO:0007669"/>
    <property type="project" value="TreeGrafter"/>
</dbReference>
<dbReference type="GO" id="GO:0051537">
    <property type="term" value="F:2 iron, 2 sulfur cluster binding"/>
    <property type="evidence" value="ECO:0007669"/>
    <property type="project" value="UniProtKB-UniRule"/>
</dbReference>
<dbReference type="GO" id="GO:0004160">
    <property type="term" value="F:dihydroxy-acid dehydratase activity"/>
    <property type="evidence" value="ECO:0007669"/>
    <property type="project" value="UniProtKB-UniRule"/>
</dbReference>
<dbReference type="GO" id="GO:0000287">
    <property type="term" value="F:magnesium ion binding"/>
    <property type="evidence" value="ECO:0007669"/>
    <property type="project" value="UniProtKB-UniRule"/>
</dbReference>
<dbReference type="GO" id="GO:0009097">
    <property type="term" value="P:isoleucine biosynthetic process"/>
    <property type="evidence" value="ECO:0007669"/>
    <property type="project" value="UniProtKB-UniRule"/>
</dbReference>
<dbReference type="GO" id="GO:0009099">
    <property type="term" value="P:L-valine biosynthetic process"/>
    <property type="evidence" value="ECO:0007669"/>
    <property type="project" value="UniProtKB-UniRule"/>
</dbReference>
<dbReference type="FunFam" id="3.50.30.80:FF:000001">
    <property type="entry name" value="Dihydroxy-acid dehydratase"/>
    <property type="match status" value="1"/>
</dbReference>
<dbReference type="Gene3D" id="3.50.30.80">
    <property type="entry name" value="IlvD/EDD C-terminal domain-like"/>
    <property type="match status" value="1"/>
</dbReference>
<dbReference type="HAMAP" id="MF_00012">
    <property type="entry name" value="IlvD"/>
    <property type="match status" value="1"/>
</dbReference>
<dbReference type="InterPro" id="IPR042096">
    <property type="entry name" value="Dihydro-acid_dehy_C"/>
</dbReference>
<dbReference type="InterPro" id="IPR004404">
    <property type="entry name" value="DihydroxyA_deHydtase"/>
</dbReference>
<dbReference type="InterPro" id="IPR020558">
    <property type="entry name" value="DiOHA_6PGluconate_deHydtase_CS"/>
</dbReference>
<dbReference type="InterPro" id="IPR056740">
    <property type="entry name" value="ILV_EDD_C"/>
</dbReference>
<dbReference type="InterPro" id="IPR000581">
    <property type="entry name" value="ILV_EDD_N"/>
</dbReference>
<dbReference type="InterPro" id="IPR037237">
    <property type="entry name" value="IlvD/EDD_N"/>
</dbReference>
<dbReference type="NCBIfam" id="TIGR00110">
    <property type="entry name" value="ilvD"/>
    <property type="match status" value="1"/>
</dbReference>
<dbReference type="NCBIfam" id="NF002068">
    <property type="entry name" value="PRK00911.1"/>
    <property type="match status" value="1"/>
</dbReference>
<dbReference type="PANTHER" id="PTHR43661">
    <property type="entry name" value="D-XYLONATE DEHYDRATASE"/>
    <property type="match status" value="1"/>
</dbReference>
<dbReference type="PANTHER" id="PTHR43661:SF3">
    <property type="entry name" value="D-XYLONATE DEHYDRATASE YAGF-RELATED"/>
    <property type="match status" value="1"/>
</dbReference>
<dbReference type="Pfam" id="PF24877">
    <property type="entry name" value="ILV_EDD_C"/>
    <property type="match status" value="1"/>
</dbReference>
<dbReference type="Pfam" id="PF00920">
    <property type="entry name" value="ILVD_EDD_N"/>
    <property type="match status" value="1"/>
</dbReference>
<dbReference type="SUPFAM" id="SSF143975">
    <property type="entry name" value="IlvD/EDD N-terminal domain-like"/>
    <property type="match status" value="1"/>
</dbReference>
<dbReference type="SUPFAM" id="SSF52016">
    <property type="entry name" value="LeuD/IlvD-like"/>
    <property type="match status" value="1"/>
</dbReference>
<dbReference type="PROSITE" id="PS00886">
    <property type="entry name" value="ILVD_EDD_1"/>
    <property type="match status" value="1"/>
</dbReference>
<dbReference type="PROSITE" id="PS00887">
    <property type="entry name" value="ILVD_EDD_2"/>
    <property type="match status" value="1"/>
</dbReference>
<proteinExistence type="inferred from homology"/>
<feature type="chain" id="PRO_1000089424" description="Dihydroxy-acid dehydratase">
    <location>
        <begin position="1"/>
        <end position="554"/>
    </location>
</feature>
<feature type="active site" description="Proton acceptor" evidence="1">
    <location>
        <position position="468"/>
    </location>
</feature>
<feature type="binding site" evidence="1">
    <location>
        <position position="78"/>
    </location>
    <ligand>
        <name>Mg(2+)</name>
        <dbReference type="ChEBI" id="CHEBI:18420"/>
    </ligand>
</feature>
<feature type="binding site" evidence="1">
    <location>
        <position position="119"/>
    </location>
    <ligand>
        <name>[2Fe-2S] cluster</name>
        <dbReference type="ChEBI" id="CHEBI:190135"/>
    </ligand>
</feature>
<feature type="binding site" evidence="1">
    <location>
        <position position="120"/>
    </location>
    <ligand>
        <name>Mg(2+)</name>
        <dbReference type="ChEBI" id="CHEBI:18420"/>
    </ligand>
</feature>
<feature type="binding site" description="via carbamate group" evidence="1">
    <location>
        <position position="121"/>
    </location>
    <ligand>
        <name>Mg(2+)</name>
        <dbReference type="ChEBI" id="CHEBI:18420"/>
    </ligand>
</feature>
<feature type="binding site" evidence="1">
    <location>
        <position position="191"/>
    </location>
    <ligand>
        <name>[2Fe-2S] cluster</name>
        <dbReference type="ChEBI" id="CHEBI:190135"/>
    </ligand>
</feature>
<feature type="binding site" evidence="1">
    <location>
        <position position="442"/>
    </location>
    <ligand>
        <name>Mg(2+)</name>
        <dbReference type="ChEBI" id="CHEBI:18420"/>
    </ligand>
</feature>
<feature type="modified residue" description="N6-carboxylysine" evidence="1">
    <location>
        <position position="121"/>
    </location>
</feature>
<accession>B1L8U4</accession>
<reference key="1">
    <citation type="journal article" date="2011" name="J. Bacteriol.">
        <title>Genome sequence of Thermotoga sp. strain RQ2, a hyperthermophilic bacterium isolated from a geothermally heated region of the seafloor near Ribeira Quente, the Azores.</title>
        <authorList>
            <person name="Swithers K.S."/>
            <person name="DiPippo J.L."/>
            <person name="Bruce D.C."/>
            <person name="Detter C."/>
            <person name="Tapia R."/>
            <person name="Han S."/>
            <person name="Saunders E."/>
            <person name="Goodwin L.A."/>
            <person name="Han J."/>
            <person name="Woyke T."/>
            <person name="Pitluck S."/>
            <person name="Pennacchio L."/>
            <person name="Nolan M."/>
            <person name="Mikhailova N."/>
            <person name="Lykidis A."/>
            <person name="Land M.L."/>
            <person name="Brettin T."/>
            <person name="Stetter K.O."/>
            <person name="Nelson K.E."/>
            <person name="Gogarten J.P."/>
            <person name="Noll K.M."/>
        </authorList>
    </citation>
    <scope>NUCLEOTIDE SEQUENCE [LARGE SCALE GENOMIC DNA]</scope>
    <source>
        <strain>RQ2</strain>
    </source>
</reference>
<evidence type="ECO:0000255" key="1">
    <source>
        <dbReference type="HAMAP-Rule" id="MF_00012"/>
    </source>
</evidence>
<gene>
    <name evidence="1" type="primary">ilvD</name>
    <name type="ordered locus">TRQ2_0386</name>
</gene>
<organism>
    <name type="scientific">Thermotoga sp. (strain RQ2)</name>
    <dbReference type="NCBI Taxonomy" id="126740"/>
    <lineage>
        <taxon>Bacteria</taxon>
        <taxon>Thermotogati</taxon>
        <taxon>Thermotogota</taxon>
        <taxon>Thermotogae</taxon>
        <taxon>Thermotogales</taxon>
        <taxon>Thermotogaceae</taxon>
        <taxon>Thermotoga</taxon>
    </lineage>
</organism>